<gene>
    <name evidence="1" type="primary">ubiA</name>
    <name type="ordered locus">Ssed_0468</name>
</gene>
<accession>A8FQF8</accession>
<name>UBIA_SHESH</name>
<sequence>MNLRDKLDVYLRLARMDRPIGTLLLLWPCLMALLLAAGGMPDLKVLTIFIFGVVVMRACGCIINDYADRDLDAHVDRTKSRPLASGEVTGREALILFAVMGLFAFGLVLMLNPLVVKLSVVGIILTIIYPFTKRFTNMPQMFLGVVWSWSIPMAYAAQTGEVPAEAWWLFAANWCWTVAYDTMYAMVDREDDLKVGIKSTAILFGKYDRQIIGLFQLAALACFITAGWAADRGLVYGLGIITFVGFSMYQQKLIHERERAPCFKAFLNNNWAGLSLFIALGVDYLI</sequence>
<reference key="1">
    <citation type="submission" date="2007-08" db="EMBL/GenBank/DDBJ databases">
        <title>Complete sequence of Shewanella sediminis HAW-EB3.</title>
        <authorList>
            <consortium name="US DOE Joint Genome Institute"/>
            <person name="Copeland A."/>
            <person name="Lucas S."/>
            <person name="Lapidus A."/>
            <person name="Barry K."/>
            <person name="Glavina del Rio T."/>
            <person name="Dalin E."/>
            <person name="Tice H."/>
            <person name="Pitluck S."/>
            <person name="Chertkov O."/>
            <person name="Brettin T."/>
            <person name="Bruce D."/>
            <person name="Detter J.C."/>
            <person name="Han C."/>
            <person name="Schmutz J."/>
            <person name="Larimer F."/>
            <person name="Land M."/>
            <person name="Hauser L."/>
            <person name="Kyrpides N."/>
            <person name="Kim E."/>
            <person name="Zhao J.-S."/>
            <person name="Richardson P."/>
        </authorList>
    </citation>
    <scope>NUCLEOTIDE SEQUENCE [LARGE SCALE GENOMIC DNA]</scope>
    <source>
        <strain>HAW-EB3</strain>
    </source>
</reference>
<protein>
    <recommendedName>
        <fullName evidence="1">4-hydroxybenzoate octaprenyltransferase</fullName>
        <ecNumber evidence="1">2.5.1.39</ecNumber>
    </recommendedName>
    <alternativeName>
        <fullName evidence="1">4-HB polyprenyltransferase</fullName>
    </alternativeName>
</protein>
<feature type="chain" id="PRO_1000088187" description="4-hydroxybenzoate octaprenyltransferase">
    <location>
        <begin position="1"/>
        <end position="286"/>
    </location>
</feature>
<feature type="transmembrane region" description="Helical" evidence="1">
    <location>
        <begin position="20"/>
        <end position="40"/>
    </location>
</feature>
<feature type="transmembrane region" description="Helical" evidence="1">
    <location>
        <begin position="43"/>
        <end position="63"/>
    </location>
</feature>
<feature type="transmembrane region" description="Helical" evidence="1">
    <location>
        <begin position="95"/>
        <end position="115"/>
    </location>
</feature>
<feature type="transmembrane region" description="Helical" evidence="1">
    <location>
        <begin position="142"/>
        <end position="162"/>
    </location>
</feature>
<feature type="transmembrane region" description="Helical" evidence="1">
    <location>
        <begin position="167"/>
        <end position="187"/>
    </location>
</feature>
<feature type="transmembrane region" description="Helical" evidence="1">
    <location>
        <begin position="210"/>
        <end position="230"/>
    </location>
</feature>
<feature type="transmembrane region" description="Helical" evidence="1">
    <location>
        <begin position="234"/>
        <end position="254"/>
    </location>
</feature>
<keyword id="KW-0997">Cell inner membrane</keyword>
<keyword id="KW-1003">Cell membrane</keyword>
<keyword id="KW-0460">Magnesium</keyword>
<keyword id="KW-0472">Membrane</keyword>
<keyword id="KW-1185">Reference proteome</keyword>
<keyword id="KW-0808">Transferase</keyword>
<keyword id="KW-0812">Transmembrane</keyword>
<keyword id="KW-1133">Transmembrane helix</keyword>
<keyword id="KW-0831">Ubiquinone biosynthesis</keyword>
<evidence type="ECO:0000255" key="1">
    <source>
        <dbReference type="HAMAP-Rule" id="MF_01635"/>
    </source>
</evidence>
<organism>
    <name type="scientific">Shewanella sediminis (strain HAW-EB3)</name>
    <dbReference type="NCBI Taxonomy" id="425104"/>
    <lineage>
        <taxon>Bacteria</taxon>
        <taxon>Pseudomonadati</taxon>
        <taxon>Pseudomonadota</taxon>
        <taxon>Gammaproteobacteria</taxon>
        <taxon>Alteromonadales</taxon>
        <taxon>Shewanellaceae</taxon>
        <taxon>Shewanella</taxon>
    </lineage>
</organism>
<proteinExistence type="inferred from homology"/>
<dbReference type="EC" id="2.5.1.39" evidence="1"/>
<dbReference type="EMBL" id="CP000821">
    <property type="protein sequence ID" value="ABV35081.1"/>
    <property type="molecule type" value="Genomic_DNA"/>
</dbReference>
<dbReference type="RefSeq" id="WP_012140818.1">
    <property type="nucleotide sequence ID" value="NC_009831.1"/>
</dbReference>
<dbReference type="SMR" id="A8FQF8"/>
<dbReference type="STRING" id="425104.Ssed_0468"/>
<dbReference type="KEGG" id="sse:Ssed_0468"/>
<dbReference type="eggNOG" id="COG0382">
    <property type="taxonomic scope" value="Bacteria"/>
</dbReference>
<dbReference type="HOGENOM" id="CLU_034879_1_0_6"/>
<dbReference type="OrthoDB" id="9782418at2"/>
<dbReference type="UniPathway" id="UPA00232"/>
<dbReference type="Proteomes" id="UP000002015">
    <property type="component" value="Chromosome"/>
</dbReference>
<dbReference type="GO" id="GO:0005886">
    <property type="term" value="C:plasma membrane"/>
    <property type="evidence" value="ECO:0007669"/>
    <property type="project" value="UniProtKB-SubCell"/>
</dbReference>
<dbReference type="GO" id="GO:0008412">
    <property type="term" value="F:4-hydroxybenzoate polyprenyltransferase activity"/>
    <property type="evidence" value="ECO:0007669"/>
    <property type="project" value="UniProtKB-UniRule"/>
</dbReference>
<dbReference type="GO" id="GO:0006744">
    <property type="term" value="P:ubiquinone biosynthetic process"/>
    <property type="evidence" value="ECO:0007669"/>
    <property type="project" value="UniProtKB-UniRule"/>
</dbReference>
<dbReference type="CDD" id="cd13959">
    <property type="entry name" value="PT_UbiA_COQ2"/>
    <property type="match status" value="1"/>
</dbReference>
<dbReference type="FunFam" id="1.10.357.140:FF:000002">
    <property type="entry name" value="4-hydroxybenzoate octaprenyltransferase"/>
    <property type="match status" value="1"/>
</dbReference>
<dbReference type="FunFam" id="1.20.120.1780:FF:000001">
    <property type="entry name" value="4-hydroxybenzoate octaprenyltransferase"/>
    <property type="match status" value="1"/>
</dbReference>
<dbReference type="Gene3D" id="1.10.357.140">
    <property type="entry name" value="UbiA prenyltransferase"/>
    <property type="match status" value="1"/>
</dbReference>
<dbReference type="Gene3D" id="1.20.120.1780">
    <property type="entry name" value="UbiA prenyltransferase"/>
    <property type="match status" value="1"/>
</dbReference>
<dbReference type="HAMAP" id="MF_01635">
    <property type="entry name" value="UbiA"/>
    <property type="match status" value="1"/>
</dbReference>
<dbReference type="InterPro" id="IPR006370">
    <property type="entry name" value="HB_polyprenyltransferase-like"/>
</dbReference>
<dbReference type="InterPro" id="IPR039653">
    <property type="entry name" value="Prenyltransferase"/>
</dbReference>
<dbReference type="InterPro" id="IPR000537">
    <property type="entry name" value="UbiA_prenyltransferase"/>
</dbReference>
<dbReference type="InterPro" id="IPR030470">
    <property type="entry name" value="UbiA_prenylTrfase_CS"/>
</dbReference>
<dbReference type="InterPro" id="IPR044878">
    <property type="entry name" value="UbiA_sf"/>
</dbReference>
<dbReference type="NCBIfam" id="TIGR01474">
    <property type="entry name" value="ubiA_proteo"/>
    <property type="match status" value="1"/>
</dbReference>
<dbReference type="PANTHER" id="PTHR11048:SF28">
    <property type="entry name" value="4-HYDROXYBENZOATE POLYPRENYLTRANSFERASE, MITOCHONDRIAL"/>
    <property type="match status" value="1"/>
</dbReference>
<dbReference type="PANTHER" id="PTHR11048">
    <property type="entry name" value="PRENYLTRANSFERASES"/>
    <property type="match status" value="1"/>
</dbReference>
<dbReference type="Pfam" id="PF01040">
    <property type="entry name" value="UbiA"/>
    <property type="match status" value="1"/>
</dbReference>
<dbReference type="PROSITE" id="PS00943">
    <property type="entry name" value="UBIA"/>
    <property type="match status" value="1"/>
</dbReference>
<comment type="function">
    <text evidence="1">Catalyzes the prenylation of para-hydroxybenzoate (PHB) with an all-trans polyprenyl group. Mediates the second step in the final reaction sequence of ubiquinone-8 (UQ-8) biosynthesis, which is the condensation of the polyisoprenoid side chain with PHB, generating the first membrane-bound Q intermediate 3-octaprenyl-4-hydroxybenzoate.</text>
</comment>
<comment type="catalytic activity">
    <reaction evidence="1">
        <text>all-trans-octaprenyl diphosphate + 4-hydroxybenzoate = 4-hydroxy-3-(all-trans-octaprenyl)benzoate + diphosphate</text>
        <dbReference type="Rhea" id="RHEA:27782"/>
        <dbReference type="ChEBI" id="CHEBI:1617"/>
        <dbReference type="ChEBI" id="CHEBI:17879"/>
        <dbReference type="ChEBI" id="CHEBI:33019"/>
        <dbReference type="ChEBI" id="CHEBI:57711"/>
        <dbReference type="EC" id="2.5.1.39"/>
    </reaction>
</comment>
<comment type="cofactor">
    <cofactor evidence="1">
        <name>Mg(2+)</name>
        <dbReference type="ChEBI" id="CHEBI:18420"/>
    </cofactor>
</comment>
<comment type="pathway">
    <text evidence="1">Cofactor biosynthesis; ubiquinone biosynthesis.</text>
</comment>
<comment type="subcellular location">
    <subcellularLocation>
        <location evidence="1">Cell inner membrane</location>
        <topology evidence="1">Multi-pass membrane protein</topology>
    </subcellularLocation>
</comment>
<comment type="similarity">
    <text evidence="1">Belongs to the UbiA prenyltransferase family.</text>
</comment>